<reference key="1">
    <citation type="journal article" date="2004" name="Nature">
        <title>Genome evolution in yeasts.</title>
        <authorList>
            <person name="Dujon B."/>
            <person name="Sherman D."/>
            <person name="Fischer G."/>
            <person name="Durrens P."/>
            <person name="Casaregola S."/>
            <person name="Lafontaine I."/>
            <person name="de Montigny J."/>
            <person name="Marck C."/>
            <person name="Neuveglise C."/>
            <person name="Talla E."/>
            <person name="Goffard N."/>
            <person name="Frangeul L."/>
            <person name="Aigle M."/>
            <person name="Anthouard V."/>
            <person name="Babour A."/>
            <person name="Barbe V."/>
            <person name="Barnay S."/>
            <person name="Blanchin S."/>
            <person name="Beckerich J.-M."/>
            <person name="Beyne E."/>
            <person name="Bleykasten C."/>
            <person name="Boisrame A."/>
            <person name="Boyer J."/>
            <person name="Cattolico L."/>
            <person name="Confanioleri F."/>
            <person name="de Daruvar A."/>
            <person name="Despons L."/>
            <person name="Fabre E."/>
            <person name="Fairhead C."/>
            <person name="Ferry-Dumazet H."/>
            <person name="Groppi A."/>
            <person name="Hantraye F."/>
            <person name="Hennequin C."/>
            <person name="Jauniaux N."/>
            <person name="Joyet P."/>
            <person name="Kachouri R."/>
            <person name="Kerrest A."/>
            <person name="Koszul R."/>
            <person name="Lemaire M."/>
            <person name="Lesur I."/>
            <person name="Ma L."/>
            <person name="Muller H."/>
            <person name="Nicaud J.-M."/>
            <person name="Nikolski M."/>
            <person name="Oztas S."/>
            <person name="Ozier-Kalogeropoulos O."/>
            <person name="Pellenz S."/>
            <person name="Potier S."/>
            <person name="Richard G.-F."/>
            <person name="Straub M.-L."/>
            <person name="Suleau A."/>
            <person name="Swennen D."/>
            <person name="Tekaia F."/>
            <person name="Wesolowski-Louvel M."/>
            <person name="Westhof E."/>
            <person name="Wirth B."/>
            <person name="Zeniou-Meyer M."/>
            <person name="Zivanovic Y."/>
            <person name="Bolotin-Fukuhara M."/>
            <person name="Thierry A."/>
            <person name="Bouchier C."/>
            <person name="Caudron B."/>
            <person name="Scarpelli C."/>
            <person name="Gaillardin C."/>
            <person name="Weissenbach J."/>
            <person name="Wincker P."/>
            <person name="Souciet J.-L."/>
        </authorList>
    </citation>
    <scope>NUCLEOTIDE SEQUENCE [LARGE SCALE GENOMIC DNA]</scope>
    <source>
        <strain>ATCC 8585 / CBS 2359 / DSM 70799 / NBRC 1267 / NRRL Y-1140 / WM37</strain>
    </source>
</reference>
<protein>
    <recommendedName>
        <fullName>Histone acetyltransferase ESA1</fullName>
        <ecNumber evidence="3">2.3.1.48</ecNumber>
    </recommendedName>
    <alternativeName>
        <fullName evidence="7">Protein 2-hydroxyisobutyryltransferase ESA1</fullName>
        <ecNumber evidence="2">2.3.1.-</ecNumber>
    </alternativeName>
    <alternativeName>
        <fullName evidence="7">Protein acetyltransferase ESA1</fullName>
        <ecNumber evidence="3">2.3.1.-</ecNumber>
    </alternativeName>
    <alternativeName>
        <fullName evidence="7">Protein crotonyltransferase ESA1</fullName>
        <ecNumber evidence="3">2.3.1.-</ecNumber>
    </alternativeName>
</protein>
<accession>Q6CKE9</accession>
<organism>
    <name type="scientific">Kluyveromyces lactis (strain ATCC 8585 / CBS 2359 / DSM 70799 / NBRC 1267 / NRRL Y-1140 / WM37)</name>
    <name type="common">Yeast</name>
    <name type="synonym">Candida sphaerica</name>
    <dbReference type="NCBI Taxonomy" id="284590"/>
    <lineage>
        <taxon>Eukaryota</taxon>
        <taxon>Fungi</taxon>
        <taxon>Dikarya</taxon>
        <taxon>Ascomycota</taxon>
        <taxon>Saccharomycotina</taxon>
        <taxon>Saccharomycetes</taxon>
        <taxon>Saccharomycetales</taxon>
        <taxon>Saccharomycetaceae</taxon>
        <taxon>Kluyveromyces</taxon>
    </lineage>
</organism>
<name>ESA1_KLULA</name>
<keyword id="KW-0007">Acetylation</keyword>
<keyword id="KW-0010">Activator</keyword>
<keyword id="KW-0156">Chromatin regulator</keyword>
<keyword id="KW-0158">Chromosome</keyword>
<keyword id="KW-0227">DNA damage</keyword>
<keyword id="KW-0234">DNA repair</keyword>
<keyword id="KW-0539">Nucleus</keyword>
<keyword id="KW-1185">Reference proteome</keyword>
<keyword id="KW-0804">Transcription</keyword>
<keyword id="KW-0805">Transcription regulation</keyword>
<keyword id="KW-0808">Transferase</keyword>
<evidence type="ECO:0000250" key="1"/>
<evidence type="ECO:0000250" key="2">
    <source>
        <dbReference type="UniProtKB" id="O94446"/>
    </source>
</evidence>
<evidence type="ECO:0000250" key="3">
    <source>
        <dbReference type="UniProtKB" id="Q08649"/>
    </source>
</evidence>
<evidence type="ECO:0000255" key="4"/>
<evidence type="ECO:0000255" key="5">
    <source>
        <dbReference type="PROSITE-ProRule" id="PRU01063"/>
    </source>
</evidence>
<evidence type="ECO:0000256" key="6">
    <source>
        <dbReference type="SAM" id="MobiDB-lite"/>
    </source>
</evidence>
<evidence type="ECO:0000305" key="7"/>
<gene>
    <name type="primary">ESA1</name>
    <name type="ordered locus">KLLA0F11209g</name>
</gene>
<proteinExistence type="inferred from homology"/>
<dbReference type="EC" id="2.3.1.48" evidence="3"/>
<dbReference type="EC" id="2.3.1.-" evidence="2 3"/>
<dbReference type="EMBL" id="CR382126">
    <property type="protein sequence ID" value="CAG98298.1"/>
    <property type="molecule type" value="Genomic_DNA"/>
</dbReference>
<dbReference type="RefSeq" id="XP_455590.1">
    <property type="nucleotide sequence ID" value="XM_455590.1"/>
</dbReference>
<dbReference type="SMR" id="Q6CKE9"/>
<dbReference type="FunCoup" id="Q6CKE9">
    <property type="interactions" value="1056"/>
</dbReference>
<dbReference type="STRING" id="284590.Q6CKE9"/>
<dbReference type="PaxDb" id="284590-Q6CKE9"/>
<dbReference type="KEGG" id="kla:KLLA0_F11209g"/>
<dbReference type="eggNOG" id="KOG2747">
    <property type="taxonomic scope" value="Eukaryota"/>
</dbReference>
<dbReference type="HOGENOM" id="CLU_011815_2_0_1"/>
<dbReference type="InParanoid" id="Q6CKE9"/>
<dbReference type="OMA" id="QYQRHGY"/>
<dbReference type="Proteomes" id="UP000000598">
    <property type="component" value="Chromosome F"/>
</dbReference>
<dbReference type="GO" id="GO:0000123">
    <property type="term" value="C:histone acetyltransferase complex"/>
    <property type="evidence" value="ECO:0007669"/>
    <property type="project" value="UniProtKB-ARBA"/>
</dbReference>
<dbReference type="GO" id="GO:0005634">
    <property type="term" value="C:nucleus"/>
    <property type="evidence" value="ECO:0007669"/>
    <property type="project" value="UniProtKB-SubCell"/>
</dbReference>
<dbReference type="GO" id="GO:0003682">
    <property type="term" value="F:chromatin binding"/>
    <property type="evidence" value="ECO:0007669"/>
    <property type="project" value="TreeGrafter"/>
</dbReference>
<dbReference type="GO" id="GO:0004402">
    <property type="term" value="F:histone acetyltransferase activity"/>
    <property type="evidence" value="ECO:0007669"/>
    <property type="project" value="UniProtKB-EC"/>
</dbReference>
<dbReference type="GO" id="GO:0106226">
    <property type="term" value="F:peptide 2-hydroxyisobutyryltransferase activity"/>
    <property type="evidence" value="ECO:0007669"/>
    <property type="project" value="RHEA"/>
</dbReference>
<dbReference type="GO" id="GO:0140064">
    <property type="term" value="F:peptide crotonyltransferase activity"/>
    <property type="evidence" value="ECO:0007669"/>
    <property type="project" value="RHEA"/>
</dbReference>
<dbReference type="GO" id="GO:0003712">
    <property type="term" value="F:transcription coregulator activity"/>
    <property type="evidence" value="ECO:0007669"/>
    <property type="project" value="TreeGrafter"/>
</dbReference>
<dbReference type="GO" id="GO:0006281">
    <property type="term" value="P:DNA repair"/>
    <property type="evidence" value="ECO:0007669"/>
    <property type="project" value="UniProtKB-KW"/>
</dbReference>
<dbReference type="GO" id="GO:0006357">
    <property type="term" value="P:regulation of transcription by RNA polymerase II"/>
    <property type="evidence" value="ECO:0007669"/>
    <property type="project" value="TreeGrafter"/>
</dbReference>
<dbReference type="CDD" id="cd18986">
    <property type="entry name" value="CBD_ESA1_like"/>
    <property type="match status" value="1"/>
</dbReference>
<dbReference type="CDD" id="cd04301">
    <property type="entry name" value="NAT_SF"/>
    <property type="match status" value="1"/>
</dbReference>
<dbReference type="FunFam" id="1.10.10.10:FF:000526">
    <property type="entry name" value="Histone acetyltransferase"/>
    <property type="match status" value="1"/>
</dbReference>
<dbReference type="FunFam" id="2.30.30.140:FF:000013">
    <property type="entry name" value="Histone acetyltransferase"/>
    <property type="match status" value="1"/>
</dbReference>
<dbReference type="FunFam" id="3.30.60.60:FF:000001">
    <property type="entry name" value="Histone acetyltransferase"/>
    <property type="match status" value="1"/>
</dbReference>
<dbReference type="FunFam" id="3.40.630.30:FF:000002">
    <property type="entry name" value="Histone acetyltransferase"/>
    <property type="match status" value="1"/>
</dbReference>
<dbReference type="Gene3D" id="2.30.30.140">
    <property type="match status" value="1"/>
</dbReference>
<dbReference type="Gene3D" id="3.40.630.30">
    <property type="match status" value="1"/>
</dbReference>
<dbReference type="Gene3D" id="3.30.60.60">
    <property type="entry name" value="N-acetyl transferase-like"/>
    <property type="match status" value="1"/>
</dbReference>
<dbReference type="Gene3D" id="1.10.10.10">
    <property type="entry name" value="Winged helix-like DNA-binding domain superfamily/Winged helix DNA-binding domain"/>
    <property type="match status" value="1"/>
</dbReference>
<dbReference type="InterPro" id="IPR016181">
    <property type="entry name" value="Acyl_CoA_acyltransferase"/>
</dbReference>
<dbReference type="InterPro" id="IPR016197">
    <property type="entry name" value="Chromo-like_dom_sf"/>
</dbReference>
<dbReference type="InterPro" id="IPR000953">
    <property type="entry name" value="Chromo/chromo_shadow_dom"/>
</dbReference>
<dbReference type="InterPro" id="IPR002717">
    <property type="entry name" value="HAT_MYST-type"/>
</dbReference>
<dbReference type="InterPro" id="IPR050603">
    <property type="entry name" value="MYST_HAT"/>
</dbReference>
<dbReference type="InterPro" id="IPR025995">
    <property type="entry name" value="Tudor-knot"/>
</dbReference>
<dbReference type="InterPro" id="IPR036388">
    <property type="entry name" value="WH-like_DNA-bd_sf"/>
</dbReference>
<dbReference type="InterPro" id="IPR040706">
    <property type="entry name" value="Zf-MYST"/>
</dbReference>
<dbReference type="PANTHER" id="PTHR10615">
    <property type="entry name" value="HISTONE ACETYLTRANSFERASE"/>
    <property type="match status" value="1"/>
</dbReference>
<dbReference type="PANTHER" id="PTHR10615:SF218">
    <property type="entry name" value="HISTONE ACETYLTRANSFERASE ESA1"/>
    <property type="match status" value="1"/>
</dbReference>
<dbReference type="Pfam" id="PF01853">
    <property type="entry name" value="MOZ_SAS"/>
    <property type="match status" value="1"/>
</dbReference>
<dbReference type="Pfam" id="PF11717">
    <property type="entry name" value="Tudor-knot"/>
    <property type="match status" value="1"/>
</dbReference>
<dbReference type="Pfam" id="PF17772">
    <property type="entry name" value="zf-MYST"/>
    <property type="match status" value="1"/>
</dbReference>
<dbReference type="SMART" id="SM00298">
    <property type="entry name" value="CHROMO"/>
    <property type="match status" value="1"/>
</dbReference>
<dbReference type="SUPFAM" id="SSF55729">
    <property type="entry name" value="Acyl-CoA N-acyltransferases (Nat)"/>
    <property type="match status" value="1"/>
</dbReference>
<dbReference type="SUPFAM" id="SSF54160">
    <property type="entry name" value="Chromo domain-like"/>
    <property type="match status" value="1"/>
</dbReference>
<dbReference type="PROSITE" id="PS51726">
    <property type="entry name" value="MYST_HAT"/>
    <property type="match status" value="1"/>
</dbReference>
<comment type="function">
    <text evidence="2 3">Catalytic component of the NuA4 histone acetyltransferase (HAT) complex which is involved in epigenetic transcriptional activation of selected genes principally by acetylation of nucleosomal histones H4, H3, H2B, H2A and H2A variant H2A.Z (By similarity). Acetylates histone H4 to form H4K5ac, H4K8ac, H4K12ac and H4K16ac, histone H3 to form H3K14ac, and histone H2A to form H2AK4ac and H2AK7ac (By similarity). The NuA4 complex is involved in the DNA damage response and is required for chromosome segregation. The NuA4 complex plays a direct role in repair of DNA double-strand breaks (DSBs) through homologous recombination (By similarity). Recruitment to promoters depends on H3K4me. Also acetylates non-histone proteins (By similarity). In addition to protein acetyltransferase, can use different acyl-CoA substrates, such as 2-hydroxyisobutanoyl-CoA (2-hydroxyisobutyryl-CoA) or (2E)-butenoyl-CoA (crotonyl-CoA), and is able to mediate protein 2-hydroxyisobutyrylation and crotonylation, respectively (By similarity).</text>
</comment>
<comment type="catalytic activity">
    <reaction evidence="2">
        <text>L-lysyl-[histone] + acetyl-CoA = N(6)-acetyl-L-lysyl-[histone] + CoA + H(+)</text>
        <dbReference type="Rhea" id="RHEA:21992"/>
        <dbReference type="Rhea" id="RHEA-COMP:9845"/>
        <dbReference type="Rhea" id="RHEA-COMP:11338"/>
        <dbReference type="ChEBI" id="CHEBI:15378"/>
        <dbReference type="ChEBI" id="CHEBI:29969"/>
        <dbReference type="ChEBI" id="CHEBI:57287"/>
        <dbReference type="ChEBI" id="CHEBI:57288"/>
        <dbReference type="ChEBI" id="CHEBI:61930"/>
        <dbReference type="EC" id="2.3.1.48"/>
    </reaction>
    <physiologicalReaction direction="left-to-right" evidence="2">
        <dbReference type="Rhea" id="RHEA:21993"/>
    </physiologicalReaction>
</comment>
<comment type="catalytic activity">
    <reaction evidence="3">
        <text>L-lysyl-[protein] + acetyl-CoA = N(6)-acetyl-L-lysyl-[protein] + CoA + H(+)</text>
        <dbReference type="Rhea" id="RHEA:45948"/>
        <dbReference type="Rhea" id="RHEA-COMP:9752"/>
        <dbReference type="Rhea" id="RHEA-COMP:10731"/>
        <dbReference type="ChEBI" id="CHEBI:15378"/>
        <dbReference type="ChEBI" id="CHEBI:29969"/>
        <dbReference type="ChEBI" id="CHEBI:57287"/>
        <dbReference type="ChEBI" id="CHEBI:57288"/>
        <dbReference type="ChEBI" id="CHEBI:61930"/>
    </reaction>
    <physiologicalReaction direction="left-to-right" evidence="3">
        <dbReference type="Rhea" id="RHEA:45949"/>
    </physiologicalReaction>
</comment>
<comment type="catalytic activity">
    <reaction evidence="2">
        <text>2-hydroxyisobutanoyl-CoA + L-lysyl-[protein] = N(6)-(2-hydroxyisobutanoyl)-L-lysyl-[protein] + CoA + H(+)</text>
        <dbReference type="Rhea" id="RHEA:24180"/>
        <dbReference type="Rhea" id="RHEA-COMP:9752"/>
        <dbReference type="Rhea" id="RHEA-COMP:15921"/>
        <dbReference type="ChEBI" id="CHEBI:15378"/>
        <dbReference type="ChEBI" id="CHEBI:29969"/>
        <dbReference type="ChEBI" id="CHEBI:57287"/>
        <dbReference type="ChEBI" id="CHEBI:131780"/>
        <dbReference type="ChEBI" id="CHEBI:144968"/>
    </reaction>
    <physiologicalReaction direction="left-to-right" evidence="2">
        <dbReference type="Rhea" id="RHEA:24181"/>
    </physiologicalReaction>
</comment>
<comment type="catalytic activity">
    <reaction evidence="3">
        <text>(2E)-butenoyl-CoA + L-lysyl-[protein] = N(6)-(2E)-butenoyl-L-lysyl-[protein] + CoA + H(+)</text>
        <dbReference type="Rhea" id="RHEA:53908"/>
        <dbReference type="Rhea" id="RHEA-COMP:9752"/>
        <dbReference type="Rhea" id="RHEA-COMP:13707"/>
        <dbReference type="ChEBI" id="CHEBI:15378"/>
        <dbReference type="ChEBI" id="CHEBI:29969"/>
        <dbReference type="ChEBI" id="CHEBI:57287"/>
        <dbReference type="ChEBI" id="CHEBI:57332"/>
        <dbReference type="ChEBI" id="CHEBI:137954"/>
    </reaction>
    <physiologicalReaction direction="left-to-right" evidence="3">
        <dbReference type="Rhea" id="RHEA:53909"/>
    </physiologicalReaction>
</comment>
<comment type="subunit">
    <text evidence="3">Component of the NuA4 histone acetyltransferase complex.</text>
</comment>
<comment type="subcellular location">
    <subcellularLocation>
        <location evidence="2">Nucleus</location>
    </subcellularLocation>
    <subcellularLocation>
        <location evidence="2">Chromosome</location>
    </subcellularLocation>
    <text evidence="2">Following DNA damage, localizes to sites of DNA damage, such as double stand breaks (DSBs).</text>
</comment>
<comment type="domain">
    <text evidence="3">The ESA1-RPD3 motif is common to ESA1 and RPD3 and is required for ESA1 histone acetyl-transferase (HAT) activity and RPD3 histone deacetylase (HDAC) activity.</text>
</comment>
<comment type="PTM">
    <text evidence="3">Autoacetylation at Lys-256 is required for proper function.</text>
</comment>
<comment type="similarity">
    <text evidence="7">Belongs to the MYST (SAS/MOZ) family.</text>
</comment>
<feature type="chain" id="PRO_0000051558" description="Histone acetyltransferase ESA1">
    <location>
        <begin position="1"/>
        <end position="439"/>
    </location>
</feature>
<feature type="domain" description="Tudor-knot" evidence="4">
    <location>
        <begin position="23"/>
        <end position="73"/>
    </location>
</feature>
<feature type="domain" description="MYST-type HAT" evidence="5">
    <location>
        <begin position="156"/>
        <end position="427"/>
    </location>
</feature>
<feature type="zinc finger region" description="C2HC MYST-type; degenerate" evidence="5">
    <location>
        <begin position="189"/>
        <end position="214"/>
    </location>
</feature>
<feature type="region of interest" description="Disordered" evidence="6">
    <location>
        <begin position="83"/>
        <end position="120"/>
    </location>
</feature>
<feature type="short sequence motif" description="ESA1-RPD3 motif" evidence="1">
    <location>
        <begin position="239"/>
        <end position="260"/>
    </location>
</feature>
<feature type="active site" description="Proton donor/acceptor" evidence="3">
    <location>
        <position position="332"/>
    </location>
</feature>
<feature type="binding site" evidence="3">
    <location>
        <begin position="297"/>
        <end position="301"/>
    </location>
    <ligand>
        <name>acetyl-CoA</name>
        <dbReference type="ChEBI" id="CHEBI:57288"/>
    </ligand>
</feature>
<feature type="binding site" evidence="3">
    <location>
        <begin position="306"/>
        <end position="312"/>
    </location>
    <ligand>
        <name>acetyl-CoA</name>
        <dbReference type="ChEBI" id="CHEBI:57288"/>
    </ligand>
</feature>
<feature type="binding site" evidence="3">
    <location>
        <position position="336"/>
    </location>
    <ligand>
        <name>acetyl-CoA</name>
        <dbReference type="ChEBI" id="CHEBI:57288"/>
    </ligand>
</feature>
<feature type="site" description="Important for catalytic activity" evidence="3">
    <location>
        <position position="298"/>
    </location>
</feature>
<feature type="modified residue" description="N6-acetyllysine; by autocatalysis" evidence="3">
    <location>
        <position position="256"/>
    </location>
</feature>
<sequence>MSHGEEKEPGIPQKVDSIDEIFVGCKSWVLKDGQDRLAEILSINSRRDPPKFYVHYEDFNKRLDEWITADRLQIDKEVIFPRPKELEEKKDSKKKKQQQNKSATPQAASATPDGGDVMDLDNLNVQGIPNEDISREDEIKKLRTSGSMTQNQNEVARVRNLNKVIMGKYEIEPWYFSPYPIELTDEDVVYIDDFSLQYFGSKKQYERYRKKCTLRHPPGNEIYRDDYVSFFEIDGRKQRTWCRNLCLLSKLFLDHKTLYYDVDPFLFYCMTRRDELGHHIVGYFSKEKESADAYNVACILTLPQYQRMGYGRLLIEFSYELSKKEGKVGSPEKPLSDLGLLSYRAYWADTLIKLLVEHGQEITIDEVSSISSMTTTDILHTAKALEILRFYRGQHVLYLNSDVMKRYKKLKNNKRRSIDPQKLIWTPPVFTASQLRFAW</sequence>